<gene>
    <name type="primary">CFHR3</name>
    <name type="synonym">CFHL3</name>
    <name type="synonym">FHR3</name>
</gene>
<feature type="signal peptide" evidence="1">
    <location>
        <begin position="1"/>
        <end position="18"/>
    </location>
</feature>
<feature type="chain" id="PRO_0000005898" description="Complement factor H-related protein 3">
    <location>
        <begin position="19"/>
        <end position="330"/>
    </location>
</feature>
<feature type="domain" description="Sushi 1" evidence="2">
    <location>
        <begin position="22"/>
        <end position="84"/>
    </location>
</feature>
<feature type="domain" description="Sushi 2" evidence="2">
    <location>
        <begin position="85"/>
        <end position="142"/>
    </location>
</feature>
<feature type="domain" description="Sushi 3" evidence="2">
    <location>
        <begin position="144"/>
        <end position="205"/>
    </location>
</feature>
<feature type="domain" description="Sushi 4" evidence="2">
    <location>
        <begin position="208"/>
        <end position="266"/>
    </location>
</feature>
<feature type="domain" description="Sushi 5" evidence="2">
    <location>
        <begin position="267"/>
        <end position="330"/>
    </location>
</feature>
<feature type="glycosylation site" description="N-linked (GlcNAc...) asparagine" evidence="5">
    <location>
        <position position="108"/>
    </location>
</feature>
<feature type="glycosylation site" description="N-linked (GlcNAc...) asparagine" evidence="1">
    <location>
        <position position="185"/>
    </location>
</feature>
<feature type="glycosylation site" description="N-linked (GlcNAc...) asparagine" evidence="5">
    <location>
        <position position="205"/>
    </location>
</feature>
<feature type="glycosylation site" description="N-linked (GlcNAc...) asparagine" evidence="5">
    <location>
        <position position="309"/>
    </location>
</feature>
<feature type="disulfide bond" evidence="2">
    <location>
        <begin position="23"/>
        <end position="72"/>
    </location>
</feature>
<feature type="disulfide bond" evidence="2">
    <location>
        <begin position="55"/>
        <end position="83"/>
    </location>
</feature>
<feature type="disulfide bond" evidence="2">
    <location>
        <begin position="87"/>
        <end position="129"/>
    </location>
</feature>
<feature type="disulfide bond" evidence="2">
    <location>
        <begin position="114"/>
        <end position="140"/>
    </location>
</feature>
<feature type="disulfide bond" evidence="2">
    <location>
        <begin position="146"/>
        <end position="192"/>
    </location>
</feature>
<feature type="disulfide bond" evidence="2">
    <location>
        <begin position="175"/>
        <end position="203"/>
    </location>
</feature>
<feature type="disulfide bond" evidence="2">
    <location>
        <begin position="210"/>
        <end position="253"/>
    </location>
</feature>
<feature type="disulfide bond" evidence="2">
    <location>
        <begin position="239"/>
        <end position="264"/>
    </location>
</feature>
<feature type="disulfide bond" evidence="2">
    <location>
        <begin position="268"/>
        <end position="319"/>
    </location>
</feature>
<feature type="disulfide bond" evidence="2">
    <location>
        <begin position="302"/>
        <end position="329"/>
    </location>
</feature>
<feature type="splice variant" id="VSP_043041" description="In isoform 2." evidence="6">
    <location>
        <begin position="144"/>
        <end position="204"/>
    </location>
</feature>
<feature type="sequence variant" id="VAR_048817" description="In dbSNP:rs17575274.">
    <original>H</original>
    <variation>Y</variation>
    <location>
        <position position="71"/>
    </location>
</feature>
<feature type="sequence conflict" description="In Ref. 1; CAA48639." evidence="7" ref="1">
    <original>A</original>
    <variation>VR</variation>
    <location>
        <position position="123"/>
    </location>
</feature>
<feature type="sequence conflict" description="In Ref. 1; CAA48639." evidence="7" ref="1">
    <original>K</original>
    <variation>N</variation>
    <location>
        <position position="132"/>
    </location>
</feature>
<feature type="sequence conflict" description="In Ref. 1; CAA48639." evidence="7" ref="1">
    <original>V</original>
    <variation>D</variation>
    <location>
        <position position="143"/>
    </location>
</feature>
<feature type="sequence conflict" description="In Ref. 1; CAA48639." evidence="7" ref="1">
    <original>Q</original>
    <variation>R</variation>
    <location>
        <position position="194"/>
    </location>
</feature>
<feature type="sequence conflict" description="In Ref. 1; CAA48639." evidence="7" ref="1">
    <original>P</original>
    <variation>S</variation>
    <location>
        <position position="241"/>
    </location>
</feature>
<feature type="sequence conflict" description="In Ref. 1; CAA48639." evidence="7" ref="1">
    <original>E</original>
    <variation>A</variation>
    <location>
        <position position="260"/>
    </location>
</feature>
<comment type="function">
    <text>Might be involved in complement regulation.</text>
</comment>
<comment type="interaction">
    <interactant intactId="EBI-3941903">
        <id>Q02985</id>
    </interactant>
    <interactant intactId="EBI-1395983">
        <id>P02741</id>
        <label>CRP</label>
    </interactant>
    <organismsDiffer>false</organismsDiffer>
    <experiments>2</experiments>
</comment>
<comment type="subcellular location">
    <subcellularLocation>
        <location>Secreted</location>
    </subcellularLocation>
</comment>
<comment type="alternative products">
    <event type="alternative splicing"/>
    <isoform>
        <id>Q02985-1</id>
        <name>1</name>
        <sequence type="displayed"/>
    </isoform>
    <isoform>
        <id>Q02985-2</id>
        <name>2</name>
        <sequence type="described" ref="VSP_043041"/>
    </isoform>
</comment>
<comment type="tissue specificity">
    <text>Expressed by the liver and secreted in plasma.</text>
</comment>
<comment type="disease" evidence="3">
    <disease id="DI-01704">
        <name>Hemolytic uremic syndrome, atypical, 1</name>
        <acronym>AHUS1</acronym>
        <description>An atypical form of hemolytic uremic syndrome. It is a complex genetic disease characterized by microangiopathic hemolytic anemia, thrombocytopenia, renal failure and absence of episodes of enterocolitis and diarrhea. In contrast to typical hemolytic uremic syndrome, atypical forms have a poorer prognosis, with higher death rates and frequent progression to end-stage renal disease.</description>
        <dbReference type="MIM" id="235400"/>
    </disease>
    <text evidence="3 4">Disease susceptibility is associated with variants affecting the gene represented in this entry. A deletion encompassing CFHR1 and CFHR3 is associated with an increased risk of atypical hemolytic uremic syndrome, likely due to a defective regulation of complement activation (PubMed:17367211). Some patients carrying the deletion have serum anti-CFH autoantibodies (PubMed:18006700).</text>
</comment>
<keyword id="KW-0025">Alternative splicing</keyword>
<keyword id="KW-1015">Disulfide bond</keyword>
<keyword id="KW-0325">Glycoprotein</keyword>
<keyword id="KW-1068">Hemolytic uremic syndrome</keyword>
<keyword id="KW-1267">Proteomics identification</keyword>
<keyword id="KW-1185">Reference proteome</keyword>
<keyword id="KW-0677">Repeat</keyword>
<keyword id="KW-0964">Secreted</keyword>
<keyword id="KW-0732">Signal</keyword>
<keyword id="KW-0768">Sushi</keyword>
<organism>
    <name type="scientific">Homo sapiens</name>
    <name type="common">Human</name>
    <dbReference type="NCBI Taxonomy" id="9606"/>
    <lineage>
        <taxon>Eukaryota</taxon>
        <taxon>Metazoa</taxon>
        <taxon>Chordata</taxon>
        <taxon>Craniata</taxon>
        <taxon>Vertebrata</taxon>
        <taxon>Euteleostomi</taxon>
        <taxon>Mammalia</taxon>
        <taxon>Eutheria</taxon>
        <taxon>Euarchontoglires</taxon>
        <taxon>Primates</taxon>
        <taxon>Haplorrhini</taxon>
        <taxon>Catarrhini</taxon>
        <taxon>Hominidae</taxon>
        <taxon>Homo</taxon>
    </lineage>
</organism>
<evidence type="ECO:0000255" key="1"/>
<evidence type="ECO:0000255" key="2">
    <source>
        <dbReference type="PROSITE-ProRule" id="PRU00302"/>
    </source>
</evidence>
<evidence type="ECO:0000269" key="3">
    <source>
    </source>
</evidence>
<evidence type="ECO:0000269" key="4">
    <source>
    </source>
</evidence>
<evidence type="ECO:0000269" key="5">
    <source>
    </source>
</evidence>
<evidence type="ECO:0000303" key="6">
    <source>
    </source>
</evidence>
<evidence type="ECO:0000305" key="7"/>
<accession>Q02985</accession>
<accession>B4DPR0</accession>
<accession>Q9UJ16</accession>
<dbReference type="EMBL" id="X68679">
    <property type="protein sequence ID" value="CAA48639.1"/>
    <property type="molecule type" value="mRNA"/>
</dbReference>
<dbReference type="EMBL" id="AK298459">
    <property type="protein sequence ID" value="BAG60672.1"/>
    <property type="molecule type" value="mRNA"/>
</dbReference>
<dbReference type="EMBL" id="AL049741">
    <property type="status" value="NOT_ANNOTATED_CDS"/>
    <property type="molecule type" value="Genomic_DNA"/>
</dbReference>
<dbReference type="EMBL" id="BC058009">
    <property type="protein sequence ID" value="AAH58009.1"/>
    <property type="molecule type" value="mRNA"/>
</dbReference>
<dbReference type="CCDS" id="CCDS30958.1">
    <molecule id="Q02985-1"/>
</dbReference>
<dbReference type="CCDS" id="CCDS53453.1">
    <molecule id="Q02985-2"/>
</dbReference>
<dbReference type="PIR" id="A45222">
    <property type="entry name" value="A45222"/>
</dbReference>
<dbReference type="RefSeq" id="NP_001160096.1">
    <molecule id="Q02985-2"/>
    <property type="nucleotide sequence ID" value="NM_001166624.2"/>
</dbReference>
<dbReference type="RefSeq" id="NP_066303.2">
    <molecule id="Q02985-1"/>
    <property type="nucleotide sequence ID" value="NM_021023.6"/>
</dbReference>
<dbReference type="SMR" id="Q02985"/>
<dbReference type="BioGRID" id="116086">
    <property type="interactions" value="5"/>
</dbReference>
<dbReference type="FunCoup" id="Q02985">
    <property type="interactions" value="87"/>
</dbReference>
<dbReference type="IntAct" id="Q02985">
    <property type="interactions" value="5"/>
</dbReference>
<dbReference type="STRING" id="9606.ENSP00000356395"/>
<dbReference type="GlyConnect" id="1154">
    <property type="glycosylation" value="9 N-Linked glycans (2 sites)"/>
</dbReference>
<dbReference type="GlyCosmos" id="Q02985">
    <property type="glycosylation" value="4 sites, 10 glycans"/>
</dbReference>
<dbReference type="GlyGen" id="Q02985">
    <property type="glycosylation" value="5 sites, 35 N-linked glycans (2 sites)"/>
</dbReference>
<dbReference type="iPTMnet" id="Q02985"/>
<dbReference type="PhosphoSitePlus" id="Q02985"/>
<dbReference type="BioMuta" id="CFHR3"/>
<dbReference type="DMDM" id="13124752"/>
<dbReference type="jPOST" id="Q02985"/>
<dbReference type="MassIVE" id="Q02985"/>
<dbReference type="PaxDb" id="9606-ENSP00000356395"/>
<dbReference type="PeptideAtlas" id="Q02985"/>
<dbReference type="ProteomicsDB" id="58149">
    <molecule id="Q02985-1"/>
</dbReference>
<dbReference type="ProteomicsDB" id="58150">
    <molecule id="Q02985-2"/>
</dbReference>
<dbReference type="Antibodypedia" id="47092">
    <property type="antibodies" value="78 antibodies from 19 providers"/>
</dbReference>
<dbReference type="DNASU" id="10878"/>
<dbReference type="Ensembl" id="ENST00000367425.9">
    <molecule id="Q02985-1"/>
    <property type="protein sequence ID" value="ENSP00000356395.5"/>
    <property type="gene ID" value="ENSG00000116785.15"/>
</dbReference>
<dbReference type="Ensembl" id="ENST00000391985.7">
    <molecule id="Q02985-2"/>
    <property type="protein sequence ID" value="ENSP00000375845.3"/>
    <property type="gene ID" value="ENSG00000116785.15"/>
</dbReference>
<dbReference type="GeneID" id="10878"/>
<dbReference type="KEGG" id="hsa:10878"/>
<dbReference type="MANE-Select" id="ENST00000367425.9">
    <property type="protein sequence ID" value="ENSP00000356395.5"/>
    <property type="RefSeq nucleotide sequence ID" value="NM_021023.6"/>
    <property type="RefSeq protein sequence ID" value="NP_066303.2"/>
</dbReference>
<dbReference type="UCSC" id="uc001gtl.4">
    <molecule id="Q02985-1"/>
    <property type="organism name" value="human"/>
</dbReference>
<dbReference type="AGR" id="HGNC:16980"/>
<dbReference type="CTD" id="10878"/>
<dbReference type="DisGeNET" id="10878"/>
<dbReference type="GeneCards" id="CFHR3"/>
<dbReference type="GeneReviews" id="CFHR3"/>
<dbReference type="HGNC" id="HGNC:16980">
    <property type="gene designation" value="CFHR3"/>
</dbReference>
<dbReference type="HPA" id="ENSG00000116785">
    <property type="expression patterns" value="Tissue enriched (liver)"/>
</dbReference>
<dbReference type="MalaCards" id="CFHR3"/>
<dbReference type="MIM" id="235400">
    <property type="type" value="phenotype"/>
</dbReference>
<dbReference type="MIM" id="605336">
    <property type="type" value="gene"/>
</dbReference>
<dbReference type="neXtProt" id="NX_Q02985"/>
<dbReference type="OpenTargets" id="ENSG00000116785"/>
<dbReference type="Orphanet" id="329931">
    <property type="disease" value="C3 glomerulonephritis"/>
</dbReference>
<dbReference type="PharmGKB" id="PA134909646"/>
<dbReference type="VEuPathDB" id="HostDB:ENSG00000116785"/>
<dbReference type="eggNOG" id="ENOG502SM0B">
    <property type="taxonomic scope" value="Eukaryota"/>
</dbReference>
<dbReference type="GeneTree" id="ENSGT00940000163274"/>
<dbReference type="HOGENOM" id="CLU_020107_3_0_1"/>
<dbReference type="InParanoid" id="Q02985"/>
<dbReference type="OMA" id="KFYAMEG"/>
<dbReference type="PAN-GO" id="Q02985">
    <property type="GO annotations" value="3 GO annotations based on evolutionary models"/>
</dbReference>
<dbReference type="PhylomeDB" id="Q02985"/>
<dbReference type="TreeFam" id="TF326157"/>
<dbReference type="PathwayCommons" id="Q02985"/>
<dbReference type="Reactome" id="R-HSA-977606">
    <property type="pathway name" value="Regulation of Complement cascade"/>
</dbReference>
<dbReference type="SignaLink" id="Q02985"/>
<dbReference type="BioGRID-ORCS" id="10878">
    <property type="hits" value="24 hits in 1049 CRISPR screens"/>
</dbReference>
<dbReference type="ChiTaRS" id="CFHR3">
    <property type="organism name" value="human"/>
</dbReference>
<dbReference type="GeneWiki" id="CFHR3"/>
<dbReference type="GenomeRNAi" id="10878"/>
<dbReference type="Pharos" id="Q02985">
    <property type="development level" value="Tbio"/>
</dbReference>
<dbReference type="PRO" id="PR:Q02985"/>
<dbReference type="Proteomes" id="UP000005640">
    <property type="component" value="Chromosome 1"/>
</dbReference>
<dbReference type="RNAct" id="Q02985">
    <property type="molecule type" value="protein"/>
</dbReference>
<dbReference type="Bgee" id="ENSG00000116785">
    <property type="expression patterns" value="Expressed in right lobe of liver and 88 other cell types or tissues"/>
</dbReference>
<dbReference type="ExpressionAtlas" id="Q02985">
    <property type="expression patterns" value="baseline and differential"/>
</dbReference>
<dbReference type="GO" id="GO:0072562">
    <property type="term" value="C:blood microparticle"/>
    <property type="evidence" value="ECO:0007005"/>
    <property type="project" value="UniProtKB"/>
</dbReference>
<dbReference type="GO" id="GO:0070062">
    <property type="term" value="C:extracellular exosome"/>
    <property type="evidence" value="ECO:0007005"/>
    <property type="project" value="UniProtKB"/>
</dbReference>
<dbReference type="GO" id="GO:0005615">
    <property type="term" value="C:extracellular space"/>
    <property type="evidence" value="ECO:0000318"/>
    <property type="project" value="GO_Central"/>
</dbReference>
<dbReference type="GO" id="GO:0001851">
    <property type="term" value="F:complement component C3b binding"/>
    <property type="evidence" value="ECO:0000318"/>
    <property type="project" value="GO_Central"/>
</dbReference>
<dbReference type="GO" id="GO:0006956">
    <property type="term" value="P:complement activation"/>
    <property type="evidence" value="ECO:0000318"/>
    <property type="project" value="GO_Central"/>
</dbReference>
<dbReference type="CDD" id="cd00033">
    <property type="entry name" value="CCP"/>
    <property type="match status" value="3"/>
</dbReference>
<dbReference type="FunFam" id="2.10.70.10:FF:000041">
    <property type="entry name" value="Complement factor H"/>
    <property type="match status" value="2"/>
</dbReference>
<dbReference type="FunFam" id="2.10.70.10:FF:000026">
    <property type="entry name" value="Complement inhibitory factor H"/>
    <property type="match status" value="1"/>
</dbReference>
<dbReference type="FunFam" id="2.10.70.10:FF:000054">
    <property type="entry name" value="Complement inhibitory factor H"/>
    <property type="match status" value="1"/>
</dbReference>
<dbReference type="FunFam" id="2.10.70.10:FF:000060">
    <property type="entry name" value="Complement inhibitory factor H"/>
    <property type="match status" value="1"/>
</dbReference>
<dbReference type="Gene3D" id="2.10.70.10">
    <property type="entry name" value="Complement Module, domain 1"/>
    <property type="match status" value="5"/>
</dbReference>
<dbReference type="InterPro" id="IPR051503">
    <property type="entry name" value="ComplSys_Reg/VirEntry_Med"/>
</dbReference>
<dbReference type="InterPro" id="IPR035976">
    <property type="entry name" value="Sushi/SCR/CCP_sf"/>
</dbReference>
<dbReference type="InterPro" id="IPR000436">
    <property type="entry name" value="Sushi_SCR_CCP_dom"/>
</dbReference>
<dbReference type="PANTHER" id="PTHR45785">
    <property type="entry name" value="COMPLEMENT FACTOR H-RELATED"/>
    <property type="match status" value="1"/>
</dbReference>
<dbReference type="PANTHER" id="PTHR45785:SF4">
    <property type="entry name" value="COMPLEMENT FACTOR H-RELATED PROTEIN 3-RELATED"/>
    <property type="match status" value="1"/>
</dbReference>
<dbReference type="Pfam" id="PF00084">
    <property type="entry name" value="Sushi"/>
    <property type="match status" value="4"/>
</dbReference>
<dbReference type="SMART" id="SM00032">
    <property type="entry name" value="CCP"/>
    <property type="match status" value="4"/>
</dbReference>
<dbReference type="SUPFAM" id="SSF57535">
    <property type="entry name" value="Complement control module/SCR domain"/>
    <property type="match status" value="5"/>
</dbReference>
<dbReference type="PROSITE" id="PS50923">
    <property type="entry name" value="SUSHI"/>
    <property type="match status" value="3"/>
</dbReference>
<proteinExistence type="evidence at protein level"/>
<reference key="1">
    <citation type="journal article" date="1993" name="J. Biol. Chem.">
        <title>A novel short consensus repeat-containing molecule is related to human complement factor H.</title>
        <authorList>
            <person name="Skerka C."/>
            <person name="Kuehn S."/>
            <person name="Guenther K."/>
            <person name="Lingelbach K."/>
            <person name="Zipfel P.F."/>
        </authorList>
    </citation>
    <scope>NUCLEOTIDE SEQUENCE [MRNA] (ISOFORM 1)</scope>
    <source>
        <tissue>Liver</tissue>
    </source>
</reference>
<reference key="2">
    <citation type="journal article" date="2000" name="Mol. Immunol.">
        <title>Complement factor H: sequence analysis of 221 kb of human genomic DNA containing the entire fH, fHR-1 and fHR-3 genes.</title>
        <authorList>
            <person name="Male D.A."/>
            <person name="Ormsby R.J."/>
            <person name="Ranganathan S."/>
            <person name="Giannakis E."/>
            <person name="Gordon D.L."/>
        </authorList>
    </citation>
    <scope>NUCLEOTIDE SEQUENCE [GENOMIC DNA]</scope>
</reference>
<reference key="3">
    <citation type="journal article" date="2004" name="Nat. Genet.">
        <title>Complete sequencing and characterization of 21,243 full-length human cDNAs.</title>
        <authorList>
            <person name="Ota T."/>
            <person name="Suzuki Y."/>
            <person name="Nishikawa T."/>
            <person name="Otsuki T."/>
            <person name="Sugiyama T."/>
            <person name="Irie R."/>
            <person name="Wakamatsu A."/>
            <person name="Hayashi K."/>
            <person name="Sato H."/>
            <person name="Nagai K."/>
            <person name="Kimura K."/>
            <person name="Makita H."/>
            <person name="Sekine M."/>
            <person name="Obayashi M."/>
            <person name="Nishi T."/>
            <person name="Shibahara T."/>
            <person name="Tanaka T."/>
            <person name="Ishii S."/>
            <person name="Yamamoto J."/>
            <person name="Saito K."/>
            <person name="Kawai Y."/>
            <person name="Isono Y."/>
            <person name="Nakamura Y."/>
            <person name="Nagahari K."/>
            <person name="Murakami K."/>
            <person name="Yasuda T."/>
            <person name="Iwayanagi T."/>
            <person name="Wagatsuma M."/>
            <person name="Shiratori A."/>
            <person name="Sudo H."/>
            <person name="Hosoiri T."/>
            <person name="Kaku Y."/>
            <person name="Kodaira H."/>
            <person name="Kondo H."/>
            <person name="Sugawara M."/>
            <person name="Takahashi M."/>
            <person name="Kanda K."/>
            <person name="Yokoi T."/>
            <person name="Furuya T."/>
            <person name="Kikkawa E."/>
            <person name="Omura Y."/>
            <person name="Abe K."/>
            <person name="Kamihara K."/>
            <person name="Katsuta N."/>
            <person name="Sato K."/>
            <person name="Tanikawa M."/>
            <person name="Yamazaki M."/>
            <person name="Ninomiya K."/>
            <person name="Ishibashi T."/>
            <person name="Yamashita H."/>
            <person name="Murakawa K."/>
            <person name="Fujimori K."/>
            <person name="Tanai H."/>
            <person name="Kimata M."/>
            <person name="Watanabe M."/>
            <person name="Hiraoka S."/>
            <person name="Chiba Y."/>
            <person name="Ishida S."/>
            <person name="Ono Y."/>
            <person name="Takiguchi S."/>
            <person name="Watanabe S."/>
            <person name="Yosida M."/>
            <person name="Hotuta T."/>
            <person name="Kusano J."/>
            <person name="Kanehori K."/>
            <person name="Takahashi-Fujii A."/>
            <person name="Hara H."/>
            <person name="Tanase T.-O."/>
            <person name="Nomura Y."/>
            <person name="Togiya S."/>
            <person name="Komai F."/>
            <person name="Hara R."/>
            <person name="Takeuchi K."/>
            <person name="Arita M."/>
            <person name="Imose N."/>
            <person name="Musashino K."/>
            <person name="Yuuki H."/>
            <person name="Oshima A."/>
            <person name="Sasaki N."/>
            <person name="Aotsuka S."/>
            <person name="Yoshikawa Y."/>
            <person name="Matsunawa H."/>
            <person name="Ichihara T."/>
            <person name="Shiohata N."/>
            <person name="Sano S."/>
            <person name="Moriya S."/>
            <person name="Momiyama H."/>
            <person name="Satoh N."/>
            <person name="Takami S."/>
            <person name="Terashima Y."/>
            <person name="Suzuki O."/>
            <person name="Nakagawa S."/>
            <person name="Senoh A."/>
            <person name="Mizoguchi H."/>
            <person name="Goto Y."/>
            <person name="Shimizu F."/>
            <person name="Wakebe H."/>
            <person name="Hishigaki H."/>
            <person name="Watanabe T."/>
            <person name="Sugiyama A."/>
            <person name="Takemoto M."/>
            <person name="Kawakami B."/>
            <person name="Yamazaki M."/>
            <person name="Watanabe K."/>
            <person name="Kumagai A."/>
            <person name="Itakura S."/>
            <person name="Fukuzumi Y."/>
            <person name="Fujimori Y."/>
            <person name="Komiyama M."/>
            <person name="Tashiro H."/>
            <person name="Tanigami A."/>
            <person name="Fujiwara T."/>
            <person name="Ono T."/>
            <person name="Yamada K."/>
            <person name="Fujii Y."/>
            <person name="Ozaki K."/>
            <person name="Hirao M."/>
            <person name="Ohmori Y."/>
            <person name="Kawabata A."/>
            <person name="Hikiji T."/>
            <person name="Kobatake N."/>
            <person name="Inagaki H."/>
            <person name="Ikema Y."/>
            <person name="Okamoto S."/>
            <person name="Okitani R."/>
            <person name="Kawakami T."/>
            <person name="Noguchi S."/>
            <person name="Itoh T."/>
            <person name="Shigeta K."/>
            <person name="Senba T."/>
            <person name="Matsumura K."/>
            <person name="Nakajima Y."/>
            <person name="Mizuno T."/>
            <person name="Morinaga M."/>
            <person name="Sasaki M."/>
            <person name="Togashi T."/>
            <person name="Oyama M."/>
            <person name="Hata H."/>
            <person name="Watanabe M."/>
            <person name="Komatsu T."/>
            <person name="Mizushima-Sugano J."/>
            <person name="Satoh T."/>
            <person name="Shirai Y."/>
            <person name="Takahashi Y."/>
            <person name="Nakagawa K."/>
            <person name="Okumura K."/>
            <person name="Nagase T."/>
            <person name="Nomura N."/>
            <person name="Kikuchi H."/>
            <person name="Masuho Y."/>
            <person name="Yamashita R."/>
            <person name="Nakai K."/>
            <person name="Yada T."/>
            <person name="Nakamura Y."/>
            <person name="Ohara O."/>
            <person name="Isogai T."/>
            <person name="Sugano S."/>
        </authorList>
    </citation>
    <scope>NUCLEOTIDE SEQUENCE [LARGE SCALE MRNA] (ISOFORM 2)</scope>
    <source>
        <tissue>Liver</tissue>
    </source>
</reference>
<reference key="4">
    <citation type="journal article" date="2006" name="Nature">
        <title>The DNA sequence and biological annotation of human chromosome 1.</title>
        <authorList>
            <person name="Gregory S.G."/>
            <person name="Barlow K.F."/>
            <person name="McLay K.E."/>
            <person name="Kaul R."/>
            <person name="Swarbreck D."/>
            <person name="Dunham A."/>
            <person name="Scott C.E."/>
            <person name="Howe K.L."/>
            <person name="Woodfine K."/>
            <person name="Spencer C.C.A."/>
            <person name="Jones M.C."/>
            <person name="Gillson C."/>
            <person name="Searle S."/>
            <person name="Zhou Y."/>
            <person name="Kokocinski F."/>
            <person name="McDonald L."/>
            <person name="Evans R."/>
            <person name="Phillips K."/>
            <person name="Atkinson A."/>
            <person name="Cooper R."/>
            <person name="Jones C."/>
            <person name="Hall R.E."/>
            <person name="Andrews T.D."/>
            <person name="Lloyd C."/>
            <person name="Ainscough R."/>
            <person name="Almeida J.P."/>
            <person name="Ambrose K.D."/>
            <person name="Anderson F."/>
            <person name="Andrew R.W."/>
            <person name="Ashwell R.I.S."/>
            <person name="Aubin K."/>
            <person name="Babbage A.K."/>
            <person name="Bagguley C.L."/>
            <person name="Bailey J."/>
            <person name="Beasley H."/>
            <person name="Bethel G."/>
            <person name="Bird C.P."/>
            <person name="Bray-Allen S."/>
            <person name="Brown J.Y."/>
            <person name="Brown A.J."/>
            <person name="Buckley D."/>
            <person name="Burton J."/>
            <person name="Bye J."/>
            <person name="Carder C."/>
            <person name="Chapman J.C."/>
            <person name="Clark S.Y."/>
            <person name="Clarke G."/>
            <person name="Clee C."/>
            <person name="Cobley V."/>
            <person name="Collier R.E."/>
            <person name="Corby N."/>
            <person name="Coville G.J."/>
            <person name="Davies J."/>
            <person name="Deadman R."/>
            <person name="Dunn M."/>
            <person name="Earthrowl M."/>
            <person name="Ellington A.G."/>
            <person name="Errington H."/>
            <person name="Frankish A."/>
            <person name="Frankland J."/>
            <person name="French L."/>
            <person name="Garner P."/>
            <person name="Garnett J."/>
            <person name="Gay L."/>
            <person name="Ghori M.R.J."/>
            <person name="Gibson R."/>
            <person name="Gilby L.M."/>
            <person name="Gillett W."/>
            <person name="Glithero R.J."/>
            <person name="Grafham D.V."/>
            <person name="Griffiths C."/>
            <person name="Griffiths-Jones S."/>
            <person name="Grocock R."/>
            <person name="Hammond S."/>
            <person name="Harrison E.S.I."/>
            <person name="Hart E."/>
            <person name="Haugen E."/>
            <person name="Heath P.D."/>
            <person name="Holmes S."/>
            <person name="Holt K."/>
            <person name="Howden P.J."/>
            <person name="Hunt A.R."/>
            <person name="Hunt S.E."/>
            <person name="Hunter G."/>
            <person name="Isherwood J."/>
            <person name="James R."/>
            <person name="Johnson C."/>
            <person name="Johnson D."/>
            <person name="Joy A."/>
            <person name="Kay M."/>
            <person name="Kershaw J.K."/>
            <person name="Kibukawa M."/>
            <person name="Kimberley A.M."/>
            <person name="King A."/>
            <person name="Knights A.J."/>
            <person name="Lad H."/>
            <person name="Laird G."/>
            <person name="Lawlor S."/>
            <person name="Leongamornlert D.A."/>
            <person name="Lloyd D.M."/>
            <person name="Loveland J."/>
            <person name="Lovell J."/>
            <person name="Lush M.J."/>
            <person name="Lyne R."/>
            <person name="Martin S."/>
            <person name="Mashreghi-Mohammadi M."/>
            <person name="Matthews L."/>
            <person name="Matthews N.S.W."/>
            <person name="McLaren S."/>
            <person name="Milne S."/>
            <person name="Mistry S."/>
            <person name="Moore M.J.F."/>
            <person name="Nickerson T."/>
            <person name="O'Dell C.N."/>
            <person name="Oliver K."/>
            <person name="Palmeiri A."/>
            <person name="Palmer S.A."/>
            <person name="Parker A."/>
            <person name="Patel D."/>
            <person name="Pearce A.V."/>
            <person name="Peck A.I."/>
            <person name="Pelan S."/>
            <person name="Phelps K."/>
            <person name="Phillimore B.J."/>
            <person name="Plumb R."/>
            <person name="Rajan J."/>
            <person name="Raymond C."/>
            <person name="Rouse G."/>
            <person name="Saenphimmachak C."/>
            <person name="Sehra H.K."/>
            <person name="Sheridan E."/>
            <person name="Shownkeen R."/>
            <person name="Sims S."/>
            <person name="Skuce C.D."/>
            <person name="Smith M."/>
            <person name="Steward C."/>
            <person name="Subramanian S."/>
            <person name="Sycamore N."/>
            <person name="Tracey A."/>
            <person name="Tromans A."/>
            <person name="Van Helmond Z."/>
            <person name="Wall M."/>
            <person name="Wallis J.M."/>
            <person name="White S."/>
            <person name="Whitehead S.L."/>
            <person name="Wilkinson J.E."/>
            <person name="Willey D.L."/>
            <person name="Williams H."/>
            <person name="Wilming L."/>
            <person name="Wray P.W."/>
            <person name="Wu Z."/>
            <person name="Coulson A."/>
            <person name="Vaudin M."/>
            <person name="Sulston J.E."/>
            <person name="Durbin R.M."/>
            <person name="Hubbard T."/>
            <person name="Wooster R."/>
            <person name="Dunham I."/>
            <person name="Carter N.P."/>
            <person name="McVean G."/>
            <person name="Ross M.T."/>
            <person name="Harrow J."/>
            <person name="Olson M.V."/>
            <person name="Beck S."/>
            <person name="Rogers J."/>
            <person name="Bentley D.R."/>
        </authorList>
    </citation>
    <scope>NUCLEOTIDE SEQUENCE [LARGE SCALE GENOMIC DNA]</scope>
</reference>
<reference key="5">
    <citation type="journal article" date="2004" name="Genome Res.">
        <title>The status, quality, and expansion of the NIH full-length cDNA project: the Mammalian Gene Collection (MGC).</title>
        <authorList>
            <consortium name="The MGC Project Team"/>
        </authorList>
    </citation>
    <scope>NUCLEOTIDE SEQUENCE [LARGE SCALE MRNA] (ISOFORM 1)</scope>
    <source>
        <tissue>Liver</tissue>
    </source>
</reference>
<reference key="6">
    <citation type="journal article" date="1994" name="Immunol. Today">
        <title>Complement factor H and related proteins: an expanding family of complement-regulatory proteins?</title>
        <authorList>
            <person name="Zipfel P.F."/>
            <person name="Skerka C."/>
        </authorList>
    </citation>
    <scope>REVIEW</scope>
</reference>
<reference key="7">
    <citation type="journal article" date="2007" name="PLoS Genet.">
        <title>Deletion of complement factor H-related genes CFHR1 and CFHR3 is associated with atypical hemolytic uremic syndrome.</title>
        <authorList>
            <person name="Zipfel P.F."/>
            <person name="Edey M."/>
            <person name="Heinen S."/>
            <person name="Jozsi M."/>
            <person name="Richter H."/>
            <person name="Misselwitz J."/>
            <person name="Hoppe B."/>
            <person name="Routledge D."/>
            <person name="Strain L."/>
            <person name="Hughes A.E."/>
            <person name="Goodship J.A."/>
            <person name="Licht C."/>
            <person name="Goodship T.H."/>
            <person name="Skerka C."/>
        </authorList>
    </citation>
    <scope>INVOLVEMENT IN AHUS1</scope>
</reference>
<reference key="8">
    <citation type="journal article" date="2008" name="Blood">
        <title>Factor H autoantibodies in atypical hemolytic uremic syndrome correlate with CFHR1/CFHR3 deficiency.</title>
        <authorList>
            <person name="Jozsi M."/>
            <person name="Licht C."/>
            <person name="Strobel S."/>
            <person name="Zipfel S.L."/>
            <person name="Richter H."/>
            <person name="Heinen S."/>
            <person name="Zipfel P.F."/>
            <person name="Skerka C."/>
        </authorList>
    </citation>
    <scope>INVOLVEMENT IN AHUS1</scope>
</reference>
<reference key="9">
    <citation type="journal article" date="2009" name="J. Proteome Res.">
        <title>Glycoproteomics analysis of human liver tissue by combination of multiple enzyme digestion and hydrazide chemistry.</title>
        <authorList>
            <person name="Chen R."/>
            <person name="Jiang X."/>
            <person name="Sun D."/>
            <person name="Han G."/>
            <person name="Wang F."/>
            <person name="Ye M."/>
            <person name="Wang L."/>
            <person name="Zou H."/>
        </authorList>
    </citation>
    <scope>GLYCOSYLATION [LARGE SCALE ANALYSIS] AT ASN-108; ASN-205 AND ASN-309</scope>
    <source>
        <tissue>Liver</tissue>
    </source>
</reference>
<sequence>MLLLINVILTLWVSCANGQVKPCDFPDIKHGGLFHENMRRPYFPVAVGKYYSYYCDEHFETPSGSYWDYIHCTQNGWSPAVPCLRKCYFPYLENGYNQNYGRKFVQGNSTEVACHPGYGLPKAQTTVTCTEKGWSPTPRCIRVRTCSKSDIEIENGFISESSSIYILNKEIQYKCKPGYATADGNSSGSITCLQNGWSAQPICINSSEKCGPPPPISNGDTTSFLLKVYVPQSRVEYQCQPYYELQGSNYVTCSNGEWSEPPRCIHPCIITEENMNKNNIKLKGRSDRKYYAKTGDTIEFMCKLGYNANTSILSFQAVCREGIVEYPRCE</sequence>
<protein>
    <recommendedName>
        <fullName>Complement factor H-related protein 3</fullName>
        <shortName>FHR-3</shortName>
    </recommendedName>
    <alternativeName>
        <fullName>DOWN16</fullName>
    </alternativeName>
    <alternativeName>
        <fullName>H factor-like protein 3</fullName>
    </alternativeName>
</protein>
<name>FHR3_HUMAN</name>